<dbReference type="EMBL" id="AB087254">
    <property type="protein sequence ID" value="BAC57494.1"/>
    <property type="molecule type" value="Genomic_DNA"/>
</dbReference>
<dbReference type="EMBL" id="AB087254">
    <property type="protein sequence ID" value="BAC57495.1"/>
    <property type="molecule type" value="Genomic_DNA"/>
</dbReference>
<dbReference type="EMBL" id="AK011786">
    <property type="protein sequence ID" value="BAB27840.1"/>
    <property type="molecule type" value="mRNA"/>
</dbReference>
<dbReference type="EMBL" id="AK017699">
    <property type="protein sequence ID" value="BAB30882.1"/>
    <property type="molecule type" value="mRNA"/>
</dbReference>
<dbReference type="EMBL" id="AK075873">
    <property type="protein sequence ID" value="BAC36020.1"/>
    <property type="molecule type" value="mRNA"/>
</dbReference>
<dbReference type="EMBL" id="AK168329">
    <property type="protein sequence ID" value="BAE40267.1"/>
    <property type="molecule type" value="mRNA"/>
</dbReference>
<dbReference type="EMBL" id="AL591542">
    <property type="status" value="NOT_ANNOTATED_CDS"/>
    <property type="molecule type" value="Genomic_DNA"/>
</dbReference>
<dbReference type="EMBL" id="BC018278">
    <property type="protein sequence ID" value="AAH18278.1"/>
    <property type="molecule type" value="mRNA"/>
</dbReference>
<dbReference type="CCDS" id="CCDS17020.1">
    <molecule id="Q9CYG7-2"/>
</dbReference>
<dbReference type="CCDS" id="CCDS71187.1">
    <molecule id="Q9CYG7-1"/>
</dbReference>
<dbReference type="RefSeq" id="NP_001278084.1">
    <molecule id="Q9CYG7-1"/>
    <property type="nucleotide sequence ID" value="NM_001291155.1"/>
</dbReference>
<dbReference type="RefSeq" id="NP_080272.1">
    <molecule id="Q9CYG7-2"/>
    <property type="nucleotide sequence ID" value="NM_025996.5"/>
</dbReference>
<dbReference type="RefSeq" id="XP_006500130.1">
    <molecule id="Q9CYG7-2"/>
    <property type="nucleotide sequence ID" value="XM_006500067.2"/>
</dbReference>
<dbReference type="SMR" id="Q9CYG7"/>
<dbReference type="BioGRID" id="211975">
    <property type="interactions" value="10"/>
</dbReference>
<dbReference type="FunCoup" id="Q9CYG7">
    <property type="interactions" value="2415"/>
</dbReference>
<dbReference type="IntAct" id="Q9CYG7">
    <property type="interactions" value="1"/>
</dbReference>
<dbReference type="STRING" id="10090.ENSMUSP00000018466"/>
<dbReference type="iPTMnet" id="Q9CYG7"/>
<dbReference type="PhosphoSitePlus" id="Q9CYG7"/>
<dbReference type="SwissPalm" id="Q9CYG7"/>
<dbReference type="jPOST" id="Q9CYG7"/>
<dbReference type="PaxDb" id="10090-ENSMUSP00000018466"/>
<dbReference type="PeptideAtlas" id="Q9CYG7"/>
<dbReference type="ProteomicsDB" id="260649">
    <molecule id="Q9CYG7-1"/>
</dbReference>
<dbReference type="ProteomicsDB" id="260650">
    <molecule id="Q9CYG7-2"/>
</dbReference>
<dbReference type="Pumba" id="Q9CYG7"/>
<dbReference type="Antibodypedia" id="12625">
    <property type="antibodies" value="336 antibodies from 27 providers"/>
</dbReference>
<dbReference type="DNASU" id="67145"/>
<dbReference type="Ensembl" id="ENSMUST00000018466.4">
    <molecule id="Q9CYG7-2"/>
    <property type="protein sequence ID" value="ENSMUSP00000018466.4"/>
    <property type="gene ID" value="ENSMUSG00000018322.11"/>
</dbReference>
<dbReference type="Ensembl" id="ENSMUST00000109384.10">
    <molecule id="Q9CYG7-1"/>
    <property type="protein sequence ID" value="ENSMUSP00000105010.4"/>
    <property type="gene ID" value="ENSMUSG00000018322.11"/>
</dbReference>
<dbReference type="GeneID" id="67145"/>
<dbReference type="KEGG" id="mmu:67145"/>
<dbReference type="UCSC" id="uc008ntr.2">
    <molecule id="Q9CYG7-2"/>
    <property type="organism name" value="mouse"/>
</dbReference>
<dbReference type="UCSC" id="uc008nts.2">
    <molecule id="Q9CYG7-1"/>
    <property type="organism name" value="mouse"/>
</dbReference>
<dbReference type="AGR" id="MGI:1914395"/>
<dbReference type="CTD" id="10953"/>
<dbReference type="MGI" id="MGI:1914395">
    <property type="gene designation" value="Tomm34"/>
</dbReference>
<dbReference type="VEuPathDB" id="HostDB:ENSMUSG00000018322"/>
<dbReference type="eggNOG" id="KOG1124">
    <property type="taxonomic scope" value="Eukaryota"/>
</dbReference>
<dbReference type="GeneTree" id="ENSGT00940000161058"/>
<dbReference type="HOGENOM" id="CLU_061396_0_0_1"/>
<dbReference type="InParanoid" id="Q9CYG7"/>
<dbReference type="OMA" id="ECTTYTN"/>
<dbReference type="OrthoDB" id="245563at2759"/>
<dbReference type="PhylomeDB" id="Q9CYG7"/>
<dbReference type="TreeFam" id="TF106202"/>
<dbReference type="BioGRID-ORCS" id="67145">
    <property type="hits" value="1 hit in 80 CRISPR screens"/>
</dbReference>
<dbReference type="CD-CODE" id="DE1E139C">
    <property type="entry name" value="Chromatoid body"/>
</dbReference>
<dbReference type="ChiTaRS" id="Tomm34">
    <property type="organism name" value="mouse"/>
</dbReference>
<dbReference type="PRO" id="PR:Q9CYG7"/>
<dbReference type="Proteomes" id="UP000000589">
    <property type="component" value="Chromosome 2"/>
</dbReference>
<dbReference type="RNAct" id="Q9CYG7">
    <property type="molecule type" value="protein"/>
</dbReference>
<dbReference type="Bgee" id="ENSMUSG00000018322">
    <property type="expression patterns" value="Expressed in floor plate of midbrain and 261 other cell types or tissues"/>
</dbReference>
<dbReference type="GO" id="GO:0005829">
    <property type="term" value="C:cytosol"/>
    <property type="evidence" value="ECO:0007669"/>
    <property type="project" value="Ensembl"/>
</dbReference>
<dbReference type="GO" id="GO:0005741">
    <property type="term" value="C:mitochondrial outer membrane"/>
    <property type="evidence" value="ECO:0007669"/>
    <property type="project" value="UniProtKB-SubCell"/>
</dbReference>
<dbReference type="GO" id="GO:0005739">
    <property type="term" value="C:mitochondrion"/>
    <property type="evidence" value="ECO:0007005"/>
    <property type="project" value="MGI"/>
</dbReference>
<dbReference type="GO" id="GO:0031072">
    <property type="term" value="F:heat shock protein binding"/>
    <property type="evidence" value="ECO:0007669"/>
    <property type="project" value="Ensembl"/>
</dbReference>
<dbReference type="GO" id="GO:0006626">
    <property type="term" value="P:protein targeting to mitochondrion"/>
    <property type="evidence" value="ECO:0007669"/>
    <property type="project" value="Ensembl"/>
</dbReference>
<dbReference type="FunFam" id="1.25.40.10:FF:000221">
    <property type="entry name" value="Mitochondrial import receptor subunit TOM34"/>
    <property type="match status" value="1"/>
</dbReference>
<dbReference type="FunFam" id="1.25.40.10:FF:000312">
    <property type="entry name" value="Mitochondrial import receptor subunit TOM34"/>
    <property type="match status" value="1"/>
</dbReference>
<dbReference type="Gene3D" id="1.25.40.10">
    <property type="entry name" value="Tetratricopeptide repeat domain"/>
    <property type="match status" value="2"/>
</dbReference>
<dbReference type="InterPro" id="IPR051982">
    <property type="entry name" value="CiliaryAsmbly_MitoImport"/>
</dbReference>
<dbReference type="InterPro" id="IPR011990">
    <property type="entry name" value="TPR-like_helical_dom_sf"/>
</dbReference>
<dbReference type="InterPro" id="IPR019734">
    <property type="entry name" value="TPR_rpt"/>
</dbReference>
<dbReference type="PANTHER" id="PTHR45984:SF2">
    <property type="entry name" value="MITOCHONDRIAL IMPORT RECEPTOR SUBUNIT TOM34"/>
    <property type="match status" value="1"/>
</dbReference>
<dbReference type="PANTHER" id="PTHR45984">
    <property type="entry name" value="RNA (RNA) POLYMERASE II ASSOCIATED PROTEIN HOMOLOG"/>
    <property type="match status" value="1"/>
</dbReference>
<dbReference type="Pfam" id="PF00515">
    <property type="entry name" value="TPR_1"/>
    <property type="match status" value="1"/>
</dbReference>
<dbReference type="Pfam" id="PF13181">
    <property type="entry name" value="TPR_8"/>
    <property type="match status" value="1"/>
</dbReference>
<dbReference type="SMART" id="SM00028">
    <property type="entry name" value="TPR"/>
    <property type="match status" value="6"/>
</dbReference>
<dbReference type="SUPFAM" id="SSF48452">
    <property type="entry name" value="TPR-like"/>
    <property type="match status" value="2"/>
</dbReference>
<dbReference type="PROSITE" id="PS50005">
    <property type="entry name" value="TPR"/>
    <property type="match status" value="6"/>
</dbReference>
<dbReference type="PROSITE" id="PS50293">
    <property type="entry name" value="TPR_REGION"/>
    <property type="match status" value="2"/>
</dbReference>
<sequence>MAPKVSDSVEQLRAAGNQNFRNGQYGEASALYERALRLLQARGSADPEEESVLYSNRAACYLKDGNCTDCIKDCTSALALVPFSIKPLLRRASAYEALEKYALAYVDYKTVLQIDNSVASALEGINRITRALMDSLGPEWRLKLPPIPVVPVSAQKRWNSLPSDNHKETAKTKSKEATATKSRVPSAGDVERAKALKEEGNDLVKKGNHKKAIEKYSESLLCSSLESATYSNRALCHLVLKQYKEAVKDCTEALKLDGKNVKAFYRRAQAYKALKDYKSSLSDISSLLQIEPRNGPAQKLRQEVNQNMN</sequence>
<feature type="chain" id="PRO_0000106335" description="Mitochondrial import receptor subunit TOM34">
    <location>
        <begin position="1"/>
        <end position="309"/>
    </location>
</feature>
<feature type="repeat" description="TPR 1">
    <location>
        <begin position="9"/>
        <end position="42"/>
    </location>
</feature>
<feature type="repeat" description="TPR 2">
    <location>
        <begin position="51"/>
        <end position="84"/>
    </location>
</feature>
<feature type="repeat" description="TPR 3">
    <location>
        <begin position="85"/>
        <end position="118"/>
    </location>
</feature>
<feature type="repeat" description="TPR 4">
    <location>
        <begin position="193"/>
        <end position="226"/>
    </location>
</feature>
<feature type="repeat" description="TPR 5">
    <location>
        <begin position="227"/>
        <end position="260"/>
    </location>
</feature>
<feature type="repeat" description="TPR 6">
    <location>
        <begin position="261"/>
        <end position="294"/>
    </location>
</feature>
<feature type="region of interest" description="Disordered" evidence="3">
    <location>
        <begin position="158"/>
        <end position="189"/>
    </location>
</feature>
<feature type="compositionally biased region" description="Basic and acidic residues" evidence="3">
    <location>
        <begin position="164"/>
        <end position="178"/>
    </location>
</feature>
<feature type="modified residue" description="Phosphoserine" evidence="7">
    <location>
        <position position="8"/>
    </location>
</feature>
<feature type="modified residue" description="Phosphoserine" evidence="2">
    <location>
        <position position="160"/>
    </location>
</feature>
<feature type="modified residue" description="Phosphoserine" evidence="7">
    <location>
        <position position="186"/>
    </location>
</feature>
<feature type="cross-link" description="Glycyl lysine isopeptide (Lys-Gly) (interchain with G-Cter in SUMO2)" evidence="2">
    <location>
        <position position="197"/>
    </location>
</feature>
<feature type="splice variant" id="VSP_035044" description="In isoform 2." evidence="5">
    <original>MAPKVSDSVEQLRAAGNQNFRNGQYG</original>
    <variation>MAPKLSDSVEELRAAGNQSFRNGQYA</variation>
    <location>
        <begin position="1"/>
        <end position="26"/>
    </location>
</feature>
<feature type="sequence conflict" description="In Ref. 1; BAC57494/BAC57495." evidence="6" ref="1">
    <original>A</original>
    <variation>S</variation>
    <location>
        <position position="59"/>
    </location>
</feature>
<feature type="modified residue" description="Phosphoserine" evidence="7">
    <location sequence="Q9CYG7-2">
        <position position="8"/>
    </location>
</feature>
<accession>Q9CYG7</accession>
<accession>A2A5N5</accession>
<accession>A2A5N6</accession>
<accession>Q3THD0</accession>
<accession>Q812F1</accession>
<accession>Q812F2</accession>
<accession>Q9D059</accession>
<proteinExistence type="evidence at protein level"/>
<protein>
    <recommendedName>
        <fullName>Mitochondrial import receptor subunit TOM34</fullName>
    </recommendedName>
    <alternativeName>
        <fullName>Translocase of outer membrane 34 kDa subunit</fullName>
    </alternativeName>
</protein>
<keyword id="KW-0025">Alternative splicing</keyword>
<keyword id="KW-0143">Chaperone</keyword>
<keyword id="KW-0963">Cytoplasm</keyword>
<keyword id="KW-1017">Isopeptide bond</keyword>
<keyword id="KW-0472">Membrane</keyword>
<keyword id="KW-0496">Mitochondrion</keyword>
<keyword id="KW-1000">Mitochondrion outer membrane</keyword>
<keyword id="KW-0597">Phosphoprotein</keyword>
<keyword id="KW-1185">Reference proteome</keyword>
<keyword id="KW-0677">Repeat</keyword>
<keyword id="KW-0802">TPR repeat</keyword>
<keyword id="KW-0832">Ubl conjugation</keyword>
<reference key="1">
    <citation type="journal article" date="2003" name="J. Biochem.">
        <title>Expression of Tom34 splicing isoforms in mouse testis and knockout of Tom34 in mice.</title>
        <authorList>
            <person name="Terada K."/>
            <person name="Ueno S."/>
            <person name="Yomogida K."/>
            <person name="Imai T."/>
            <person name="Kiyonari H."/>
            <person name="Takeda N."/>
            <person name="Yano M."/>
            <person name="Abe S."/>
            <person name="Aizawa S."/>
            <person name="Mori M."/>
        </authorList>
    </citation>
    <scope>NUCLEOTIDE SEQUENCE [GENOMIC DNA] (ISOFORMS 1 AND 2)</scope>
    <scope>TISSUE SPECIFICITY</scope>
    <scope>DEVELOPMENTAL STAGE</scope>
    <scope>DISRUPTION PHENOTYPE</scope>
    <source>
        <strain>C57BL/6J</strain>
    </source>
</reference>
<reference key="2">
    <citation type="journal article" date="2005" name="Science">
        <title>The transcriptional landscape of the mammalian genome.</title>
        <authorList>
            <person name="Carninci P."/>
            <person name="Kasukawa T."/>
            <person name="Katayama S."/>
            <person name="Gough J."/>
            <person name="Frith M.C."/>
            <person name="Maeda N."/>
            <person name="Oyama R."/>
            <person name="Ravasi T."/>
            <person name="Lenhard B."/>
            <person name="Wells C."/>
            <person name="Kodzius R."/>
            <person name="Shimokawa K."/>
            <person name="Bajic V.B."/>
            <person name="Brenner S.E."/>
            <person name="Batalov S."/>
            <person name="Forrest A.R."/>
            <person name="Zavolan M."/>
            <person name="Davis M.J."/>
            <person name="Wilming L.G."/>
            <person name="Aidinis V."/>
            <person name="Allen J.E."/>
            <person name="Ambesi-Impiombato A."/>
            <person name="Apweiler R."/>
            <person name="Aturaliya R.N."/>
            <person name="Bailey T.L."/>
            <person name="Bansal M."/>
            <person name="Baxter L."/>
            <person name="Beisel K.W."/>
            <person name="Bersano T."/>
            <person name="Bono H."/>
            <person name="Chalk A.M."/>
            <person name="Chiu K.P."/>
            <person name="Choudhary V."/>
            <person name="Christoffels A."/>
            <person name="Clutterbuck D.R."/>
            <person name="Crowe M.L."/>
            <person name="Dalla E."/>
            <person name="Dalrymple B.P."/>
            <person name="de Bono B."/>
            <person name="Della Gatta G."/>
            <person name="di Bernardo D."/>
            <person name="Down T."/>
            <person name="Engstrom P."/>
            <person name="Fagiolini M."/>
            <person name="Faulkner G."/>
            <person name="Fletcher C.F."/>
            <person name="Fukushima T."/>
            <person name="Furuno M."/>
            <person name="Futaki S."/>
            <person name="Gariboldi M."/>
            <person name="Georgii-Hemming P."/>
            <person name="Gingeras T.R."/>
            <person name="Gojobori T."/>
            <person name="Green R.E."/>
            <person name="Gustincich S."/>
            <person name="Harbers M."/>
            <person name="Hayashi Y."/>
            <person name="Hensch T.K."/>
            <person name="Hirokawa N."/>
            <person name="Hill D."/>
            <person name="Huminiecki L."/>
            <person name="Iacono M."/>
            <person name="Ikeo K."/>
            <person name="Iwama A."/>
            <person name="Ishikawa T."/>
            <person name="Jakt M."/>
            <person name="Kanapin A."/>
            <person name="Katoh M."/>
            <person name="Kawasawa Y."/>
            <person name="Kelso J."/>
            <person name="Kitamura H."/>
            <person name="Kitano H."/>
            <person name="Kollias G."/>
            <person name="Krishnan S.P."/>
            <person name="Kruger A."/>
            <person name="Kummerfeld S.K."/>
            <person name="Kurochkin I.V."/>
            <person name="Lareau L.F."/>
            <person name="Lazarevic D."/>
            <person name="Lipovich L."/>
            <person name="Liu J."/>
            <person name="Liuni S."/>
            <person name="McWilliam S."/>
            <person name="Madan Babu M."/>
            <person name="Madera M."/>
            <person name="Marchionni L."/>
            <person name="Matsuda H."/>
            <person name="Matsuzawa S."/>
            <person name="Miki H."/>
            <person name="Mignone F."/>
            <person name="Miyake S."/>
            <person name="Morris K."/>
            <person name="Mottagui-Tabar S."/>
            <person name="Mulder N."/>
            <person name="Nakano N."/>
            <person name="Nakauchi H."/>
            <person name="Ng P."/>
            <person name="Nilsson R."/>
            <person name="Nishiguchi S."/>
            <person name="Nishikawa S."/>
            <person name="Nori F."/>
            <person name="Ohara O."/>
            <person name="Okazaki Y."/>
            <person name="Orlando V."/>
            <person name="Pang K.C."/>
            <person name="Pavan W.J."/>
            <person name="Pavesi G."/>
            <person name="Pesole G."/>
            <person name="Petrovsky N."/>
            <person name="Piazza S."/>
            <person name="Reed J."/>
            <person name="Reid J.F."/>
            <person name="Ring B.Z."/>
            <person name="Ringwald M."/>
            <person name="Rost B."/>
            <person name="Ruan Y."/>
            <person name="Salzberg S.L."/>
            <person name="Sandelin A."/>
            <person name="Schneider C."/>
            <person name="Schoenbach C."/>
            <person name="Sekiguchi K."/>
            <person name="Semple C.A."/>
            <person name="Seno S."/>
            <person name="Sessa L."/>
            <person name="Sheng Y."/>
            <person name="Shibata Y."/>
            <person name="Shimada H."/>
            <person name="Shimada K."/>
            <person name="Silva D."/>
            <person name="Sinclair B."/>
            <person name="Sperling S."/>
            <person name="Stupka E."/>
            <person name="Sugiura K."/>
            <person name="Sultana R."/>
            <person name="Takenaka Y."/>
            <person name="Taki K."/>
            <person name="Tammoja K."/>
            <person name="Tan S.L."/>
            <person name="Tang S."/>
            <person name="Taylor M.S."/>
            <person name="Tegner J."/>
            <person name="Teichmann S.A."/>
            <person name="Ueda H.R."/>
            <person name="van Nimwegen E."/>
            <person name="Verardo R."/>
            <person name="Wei C.L."/>
            <person name="Yagi K."/>
            <person name="Yamanishi H."/>
            <person name="Zabarovsky E."/>
            <person name="Zhu S."/>
            <person name="Zimmer A."/>
            <person name="Hide W."/>
            <person name="Bult C."/>
            <person name="Grimmond S.M."/>
            <person name="Teasdale R.D."/>
            <person name="Liu E.T."/>
            <person name="Brusic V."/>
            <person name="Quackenbush J."/>
            <person name="Wahlestedt C."/>
            <person name="Mattick J.S."/>
            <person name="Hume D.A."/>
            <person name="Kai C."/>
            <person name="Sasaki D."/>
            <person name="Tomaru Y."/>
            <person name="Fukuda S."/>
            <person name="Kanamori-Katayama M."/>
            <person name="Suzuki M."/>
            <person name="Aoki J."/>
            <person name="Arakawa T."/>
            <person name="Iida J."/>
            <person name="Imamura K."/>
            <person name="Itoh M."/>
            <person name="Kato T."/>
            <person name="Kawaji H."/>
            <person name="Kawagashira N."/>
            <person name="Kawashima T."/>
            <person name="Kojima M."/>
            <person name="Kondo S."/>
            <person name="Konno H."/>
            <person name="Nakano K."/>
            <person name="Ninomiya N."/>
            <person name="Nishio T."/>
            <person name="Okada M."/>
            <person name="Plessy C."/>
            <person name="Shibata K."/>
            <person name="Shiraki T."/>
            <person name="Suzuki S."/>
            <person name="Tagami M."/>
            <person name="Waki K."/>
            <person name="Watahiki A."/>
            <person name="Okamura-Oho Y."/>
            <person name="Suzuki H."/>
            <person name="Kawai J."/>
            <person name="Hayashizaki Y."/>
        </authorList>
    </citation>
    <scope>NUCLEOTIDE SEQUENCE [LARGE SCALE MRNA] (ISOFORMS 1 AND 2)</scope>
    <source>
        <strain>C57BL/6J</strain>
        <strain>DBA/2J</strain>
        <tissue>Embryo</tissue>
        <tissue>Tongue</tissue>
    </source>
</reference>
<reference key="3">
    <citation type="journal article" date="2009" name="PLoS Biol.">
        <title>Lineage-specific biology revealed by a finished genome assembly of the mouse.</title>
        <authorList>
            <person name="Church D.M."/>
            <person name="Goodstadt L."/>
            <person name="Hillier L.W."/>
            <person name="Zody M.C."/>
            <person name="Goldstein S."/>
            <person name="She X."/>
            <person name="Bult C.J."/>
            <person name="Agarwala R."/>
            <person name="Cherry J.L."/>
            <person name="DiCuccio M."/>
            <person name="Hlavina W."/>
            <person name="Kapustin Y."/>
            <person name="Meric P."/>
            <person name="Maglott D."/>
            <person name="Birtle Z."/>
            <person name="Marques A.C."/>
            <person name="Graves T."/>
            <person name="Zhou S."/>
            <person name="Teague B."/>
            <person name="Potamousis K."/>
            <person name="Churas C."/>
            <person name="Place M."/>
            <person name="Herschleb J."/>
            <person name="Runnheim R."/>
            <person name="Forrest D."/>
            <person name="Amos-Landgraf J."/>
            <person name="Schwartz D.C."/>
            <person name="Cheng Z."/>
            <person name="Lindblad-Toh K."/>
            <person name="Eichler E.E."/>
            <person name="Ponting C.P."/>
        </authorList>
    </citation>
    <scope>NUCLEOTIDE SEQUENCE [LARGE SCALE GENOMIC DNA]</scope>
    <source>
        <strain>C57BL/6J</strain>
    </source>
</reference>
<reference key="4">
    <citation type="journal article" date="2004" name="Genome Res.">
        <title>The status, quality, and expansion of the NIH full-length cDNA project: the Mammalian Gene Collection (MGC).</title>
        <authorList>
            <consortium name="The MGC Project Team"/>
        </authorList>
    </citation>
    <scope>NUCLEOTIDE SEQUENCE [LARGE SCALE MRNA] (ISOFORM 1)</scope>
    <source>
        <strain>FVB/N</strain>
        <tissue>Salivary gland</tissue>
    </source>
</reference>
<reference key="5">
    <citation type="journal article" date="2010" name="Cell">
        <title>A tissue-specific atlas of mouse protein phosphorylation and expression.</title>
        <authorList>
            <person name="Huttlin E.L."/>
            <person name="Jedrychowski M.P."/>
            <person name="Elias J.E."/>
            <person name="Goswami T."/>
            <person name="Rad R."/>
            <person name="Beausoleil S.A."/>
            <person name="Villen J."/>
            <person name="Haas W."/>
            <person name="Sowa M.E."/>
            <person name="Gygi S.P."/>
        </authorList>
    </citation>
    <scope>PHOSPHORYLATION [LARGE SCALE ANALYSIS] AT SER-8 AND SER-186</scope>
    <scope>PHOSPHORYLATION [LARGE SCALE ANALYSIS] AT SER-8 (ISOFORM 2)</scope>
    <scope>IDENTIFICATION BY MASS SPECTROMETRY [LARGE SCALE ANALYSIS]</scope>
    <source>
        <tissue>Brain</tissue>
        <tissue>Heart</tissue>
        <tissue>Kidney</tissue>
        <tissue>Liver</tissue>
        <tissue>Lung</tissue>
        <tissue>Pancreas</tissue>
        <tissue>Spleen</tissue>
        <tissue>Testis</tissue>
    </source>
</reference>
<gene>
    <name type="primary">Tomm34</name>
</gene>
<name>TOM34_MOUSE</name>
<evidence type="ECO:0000250" key="1"/>
<evidence type="ECO:0000250" key="2">
    <source>
        <dbReference type="UniProtKB" id="Q15785"/>
    </source>
</evidence>
<evidence type="ECO:0000256" key="3">
    <source>
        <dbReference type="SAM" id="MobiDB-lite"/>
    </source>
</evidence>
<evidence type="ECO:0000269" key="4">
    <source>
    </source>
</evidence>
<evidence type="ECO:0000303" key="5">
    <source>
    </source>
</evidence>
<evidence type="ECO:0000305" key="6"/>
<evidence type="ECO:0007744" key="7">
    <source>
    </source>
</evidence>
<organism>
    <name type="scientific">Mus musculus</name>
    <name type="common">Mouse</name>
    <dbReference type="NCBI Taxonomy" id="10090"/>
    <lineage>
        <taxon>Eukaryota</taxon>
        <taxon>Metazoa</taxon>
        <taxon>Chordata</taxon>
        <taxon>Craniata</taxon>
        <taxon>Vertebrata</taxon>
        <taxon>Euteleostomi</taxon>
        <taxon>Mammalia</taxon>
        <taxon>Eutheria</taxon>
        <taxon>Euarchontoglires</taxon>
        <taxon>Glires</taxon>
        <taxon>Rodentia</taxon>
        <taxon>Myomorpha</taxon>
        <taxon>Muroidea</taxon>
        <taxon>Muridae</taxon>
        <taxon>Murinae</taxon>
        <taxon>Mus</taxon>
        <taxon>Mus</taxon>
    </lineage>
</organism>
<comment type="function">
    <text evidence="1">Plays a role in the import of cytosolically synthesized preproteins into mitochondria. Binds the mature portion of precursor proteins. Interacts with cellular components, and possesses weak ATPase activity. May be a chaperone-like protein that helps to keep newly synthesized precursors in an unfolded import compatible state (By similarity).</text>
</comment>
<comment type="subunit">
    <text evidence="1">Interacts with HSP90A, VCP, ATP6V1D, KIAA0665, AMPK, and DMAP1 through its TPR repeat.</text>
</comment>
<comment type="subcellular location">
    <subcellularLocation>
        <location evidence="1">Cytoplasm</location>
    </subcellularLocation>
    <subcellularLocation>
        <location evidence="1">Mitochondrion outer membrane</location>
        <topology evidence="1">Peripheral membrane protein</topology>
        <orientation evidence="1">Cytoplasmic side</orientation>
    </subcellularLocation>
</comment>
<comment type="alternative products">
    <event type="alternative splicing"/>
    <isoform>
        <id>Q9CYG7-1</id>
        <name>1</name>
        <name>Tomm34a</name>
        <sequence type="displayed"/>
    </isoform>
    <isoform>
        <id>Q9CYG7-2</id>
        <name>2</name>
        <name>Tomm34b</name>
        <sequence type="described" ref="VSP_035044"/>
    </isoform>
    <text>Isoforms 1 and 2 are produced by 2 alternative initial coding exons with very similar sequences which differ at only 4 positions.</text>
</comment>
<comment type="tissue specificity">
    <text evidence="4">Isoform 1 is ubiquitously expressed while isoform 2 is expressed only in mature testicular germ cells. Isoform 1 is expressed in all testicular cells. Isoform 2 is highly expressed in early to late pachytene cells but expression is significantly decreased in round spermatid cells.</text>
</comment>
<comment type="developmental stage">
    <text evidence="4">Isoform 2 is hardly detectable in testis at 1 week post partum but expression gradually increases for 2 to 4 weeks post partum. Isoform 1 is detected during this period but its expression does not change.</text>
</comment>
<comment type="disruption phenotype">
    <text evidence="4">Mice are viable, grow normally and both males and females are fertile. There is no effect on spermatogenesis or protein import into mitochondria.</text>
</comment>
<comment type="similarity">
    <text evidence="6">Belongs to the Tom34 family.</text>
</comment>